<proteinExistence type="evidence at protein level"/>
<sequence>MDFYSSLLPFLILIYLEFCSGFNRVCYYNGWALYRDSEHALKPENIDAFLCTHLVFAFGAIDETGTRIYVPEVFEDMHLFERMNELRHRNEDLNLVLSVGGWDMGSEAWSEVLASKDNMQTFVKEAIVYLRLHDFDGIDLDWEYPTFRGSKPIDREKFTQLIEIFRHEMDIEETPDDKWDLCLSVAVDPSEYMSSSSYEIDKITKNIDFYNLKMYDFHGHWNDPVLVKHHSALTSSSSLPSVNELAKMWVQRGVPKRKINIGIPFFGRSYRTAQPNATIGDPALGPGSDGGIGIPVSNICHLIRGGTKEHYLKEENVPFIVNGDEWVGFDNPRSVREKAALVRNNRLGGIMVWAIDMDDHSGWCGEKFPLMMSIIHGLGEYVDYMSDTLEAEREMINKKIRKAAREISYYSDKGNSTMAKKMEDKLNQLKDHLSAVQAHQSVQWANVQYSAGLGGKPLPSKDTPSWSW</sequence>
<comment type="catalytic activity">
    <reaction evidence="2">
        <text>Random endo-hydrolysis of N-acetyl-beta-D-glucosaminide (1-&gt;4)-beta-linkages in chitin and chitodextrins.</text>
        <dbReference type="EC" id="3.2.1.14"/>
    </reaction>
</comment>
<comment type="subcellular location">
    <subcellularLocation>
        <location evidence="4">Secreted</location>
    </subcellularLocation>
</comment>
<comment type="tissue specificity">
    <text evidence="4">Prismatic layer of shell (at protein level). Expressed primarily in the mantle with highest level in the outer epithelium of the mantle edge and lower level in the mantle pallium.</text>
</comment>
<comment type="similarity">
    <text evidence="2">Belongs to the glycosyl hydrolase 18 family.</text>
</comment>
<feature type="signal peptide" evidence="2">
    <location>
        <begin position="1"/>
        <end position="21"/>
    </location>
</feature>
<feature type="chain" id="PRO_0000417975" description="Putative chitinase 1" evidence="2">
    <location>
        <begin position="22"/>
        <end position="468"/>
    </location>
</feature>
<feature type="domain" description="GH18" evidence="3">
    <location>
        <begin position="22"/>
        <end position="381"/>
    </location>
</feature>
<feature type="coiled-coil region" evidence="2">
    <location>
        <begin position="386"/>
        <end position="440"/>
    </location>
</feature>
<feature type="active site" description="Proton donor" evidence="3">
    <location>
        <position position="143"/>
    </location>
</feature>
<feature type="binding site" evidence="3">
    <location>
        <begin position="73"/>
        <end position="74"/>
    </location>
    <ligand>
        <name>chitin</name>
        <dbReference type="ChEBI" id="CHEBI:17029"/>
    </ligand>
</feature>
<feature type="binding site" evidence="3">
    <location>
        <begin position="100"/>
        <end position="103"/>
    </location>
    <ligand>
        <name>chitin</name>
        <dbReference type="ChEBI" id="CHEBI:17029"/>
    </ligand>
</feature>
<feature type="binding site" evidence="3">
    <location>
        <position position="144"/>
    </location>
    <ligand>
        <name>chitin</name>
        <dbReference type="ChEBI" id="CHEBI:17029"/>
    </ligand>
</feature>
<feature type="binding site" evidence="3">
    <location>
        <begin position="213"/>
        <end position="216"/>
    </location>
    <ligand>
        <name>chitin</name>
        <dbReference type="ChEBI" id="CHEBI:17029"/>
    </ligand>
</feature>
<feature type="binding site" evidence="3">
    <location>
        <position position="353"/>
    </location>
    <ligand>
        <name>chitin</name>
        <dbReference type="ChEBI" id="CHEBI:17029"/>
    </ligand>
</feature>
<feature type="disulfide bond" evidence="3">
    <location>
        <begin position="26"/>
        <end position="51"/>
    </location>
</feature>
<dbReference type="EC" id="3.2.1.14"/>
<dbReference type="EMBL" id="HE610381">
    <property type="protein sequence ID" value="CCE46155.1"/>
    <property type="molecule type" value="mRNA"/>
</dbReference>
<dbReference type="SMR" id="H2A0L4"/>
<dbReference type="CAZy" id="GH18">
    <property type="family name" value="Glycoside Hydrolase Family 18"/>
</dbReference>
<dbReference type="GO" id="GO:0005576">
    <property type="term" value="C:extracellular region"/>
    <property type="evidence" value="ECO:0007669"/>
    <property type="project" value="UniProtKB-SubCell"/>
</dbReference>
<dbReference type="GO" id="GO:0008061">
    <property type="term" value="F:chitin binding"/>
    <property type="evidence" value="ECO:0007669"/>
    <property type="project" value="InterPro"/>
</dbReference>
<dbReference type="GO" id="GO:0008843">
    <property type="term" value="F:endochitinase activity"/>
    <property type="evidence" value="ECO:0007669"/>
    <property type="project" value="UniProtKB-EC"/>
</dbReference>
<dbReference type="GO" id="GO:0005975">
    <property type="term" value="P:carbohydrate metabolic process"/>
    <property type="evidence" value="ECO:0007669"/>
    <property type="project" value="InterPro"/>
</dbReference>
<dbReference type="GO" id="GO:0006032">
    <property type="term" value="P:chitin catabolic process"/>
    <property type="evidence" value="ECO:0007669"/>
    <property type="project" value="TreeGrafter"/>
</dbReference>
<dbReference type="Gene3D" id="3.10.50.10">
    <property type="match status" value="1"/>
</dbReference>
<dbReference type="Gene3D" id="3.20.20.80">
    <property type="entry name" value="Glycosidases"/>
    <property type="match status" value="1"/>
</dbReference>
<dbReference type="InterPro" id="IPR011583">
    <property type="entry name" value="Chitinase_II/V-like_cat"/>
</dbReference>
<dbReference type="InterPro" id="IPR029070">
    <property type="entry name" value="Chitinase_insertion_sf"/>
</dbReference>
<dbReference type="InterPro" id="IPR001223">
    <property type="entry name" value="Glyco_hydro18_cat"/>
</dbReference>
<dbReference type="InterPro" id="IPR001579">
    <property type="entry name" value="Glyco_hydro_18_chit_AS"/>
</dbReference>
<dbReference type="InterPro" id="IPR017853">
    <property type="entry name" value="Glycoside_hydrolase_SF"/>
</dbReference>
<dbReference type="InterPro" id="IPR050314">
    <property type="entry name" value="Glycosyl_Hydrlase_18"/>
</dbReference>
<dbReference type="PANTHER" id="PTHR11177">
    <property type="entry name" value="CHITINASE"/>
    <property type="match status" value="1"/>
</dbReference>
<dbReference type="PANTHER" id="PTHR11177:SF317">
    <property type="entry name" value="CHITINASE 12-RELATED"/>
    <property type="match status" value="1"/>
</dbReference>
<dbReference type="Pfam" id="PF00704">
    <property type="entry name" value="Glyco_hydro_18"/>
    <property type="match status" value="1"/>
</dbReference>
<dbReference type="SMART" id="SM00636">
    <property type="entry name" value="Glyco_18"/>
    <property type="match status" value="1"/>
</dbReference>
<dbReference type="SUPFAM" id="SSF51445">
    <property type="entry name" value="(Trans)glycosidases"/>
    <property type="match status" value="1"/>
</dbReference>
<dbReference type="SUPFAM" id="SSF54556">
    <property type="entry name" value="Chitinase insertion domain"/>
    <property type="match status" value="1"/>
</dbReference>
<dbReference type="PROSITE" id="PS01095">
    <property type="entry name" value="GH18_1"/>
    <property type="match status" value="1"/>
</dbReference>
<dbReference type="PROSITE" id="PS51910">
    <property type="entry name" value="GH18_2"/>
    <property type="match status" value="1"/>
</dbReference>
<reference evidence="5" key="1">
    <citation type="journal article" date="2010" name="BMC Genomics">
        <title>Transcriptome and proteome analysis of Pinctada margaritifera calcifying mantle and shell: focus on biomineralization.</title>
        <authorList>
            <person name="Joubert C."/>
            <person name="Piquemal D."/>
            <person name="Marie B."/>
            <person name="Manchon L."/>
            <person name="Pierrat F."/>
            <person name="Zanella-Cleon I."/>
            <person name="Cochennec-Laureau N."/>
            <person name="Gueguen Y."/>
            <person name="Montagnani C."/>
        </authorList>
    </citation>
    <scope>NUCLEOTIDE SEQUENCE [MRNA]</scope>
    <scope>IDENTIFICATION</scope>
    <source>
        <tissue>Mantle</tissue>
    </source>
</reference>
<reference key="2">
    <citation type="journal article" date="2012" name="Proc. Natl. Acad. Sci. U.S.A.">
        <title>Different secretory repertoires control the biomineralization processes of prism and nacre deposition of the pearl oyster shell.</title>
        <authorList>
            <person name="Marie B."/>
            <person name="Joubert C."/>
            <person name="Tayale A."/>
            <person name="Zanella-Cleon I."/>
            <person name="Belliard C."/>
            <person name="Piquemal D."/>
            <person name="Cochennec-Laureau N."/>
            <person name="Marin F."/>
            <person name="Gueguen Y."/>
            <person name="Montagnani C."/>
        </authorList>
    </citation>
    <scope>PROTEIN SEQUENCE OF 68-82; 117-148; 158-166; 206-213 AND 259-268</scope>
    <scope>SUBCELLULAR LOCATION</scope>
    <scope>TISSUE SPECIFICITY</scope>
    <source>
        <tissue>Shell</tissue>
    </source>
</reference>
<name>CHI1_PINMG</name>
<evidence type="ECO:0000250" key="1">
    <source>
        <dbReference type="UniProtKB" id="P86955"/>
    </source>
</evidence>
<evidence type="ECO:0000255" key="2"/>
<evidence type="ECO:0000255" key="3">
    <source>
        <dbReference type="PROSITE-ProRule" id="PRU01258"/>
    </source>
</evidence>
<evidence type="ECO:0000269" key="4">
    <source>
    </source>
</evidence>
<evidence type="ECO:0000305" key="5"/>
<keyword id="KW-0175">Coiled coil</keyword>
<keyword id="KW-0903">Direct protein sequencing</keyword>
<keyword id="KW-1015">Disulfide bond</keyword>
<keyword id="KW-0326">Glycosidase</keyword>
<keyword id="KW-0378">Hydrolase</keyword>
<keyword id="KW-0964">Secreted</keyword>
<keyword id="KW-0732">Signal</keyword>
<protein>
    <recommendedName>
        <fullName evidence="1">Putative chitinase 1</fullName>
        <ecNumber>3.2.1.14</ecNumber>
    </recommendedName>
    <alternativeName>
        <fullName>Chitinase-like protein 1</fullName>
        <shortName>Clp1</shortName>
    </alternativeName>
</protein>
<organism>
    <name type="scientific">Margaritifera margaritifera</name>
    <name type="common">Freshwater pearl mussel</name>
    <dbReference type="NCBI Taxonomy" id="102329"/>
    <lineage>
        <taxon>Eukaryota</taxon>
        <taxon>Metazoa</taxon>
        <taxon>Spiralia</taxon>
        <taxon>Lophotrochozoa</taxon>
        <taxon>Mollusca</taxon>
        <taxon>Bivalvia</taxon>
        <taxon>Autobranchia</taxon>
        <taxon>Pteriomorphia</taxon>
        <taxon>Pterioida</taxon>
        <taxon>Pterioidea</taxon>
        <taxon>Pteriidae</taxon>
        <taxon>Pinctada</taxon>
    </lineage>
</organism>
<accession>H2A0L4</accession>